<evidence type="ECO:0000255" key="1"/>
<evidence type="ECO:0000269" key="2">
    <source>
    </source>
</evidence>
<evidence type="ECO:0000269" key="3">
    <source>
    </source>
</evidence>
<evidence type="ECO:0000269" key="4">
    <source>
    </source>
</evidence>
<evidence type="ECO:0000269" key="5">
    <source>
    </source>
</evidence>
<evidence type="ECO:0000305" key="6"/>
<evidence type="ECO:0000305" key="7">
    <source>
    </source>
</evidence>
<name>TIM23_HUMAN</name>
<gene>
    <name type="primary">TIMM23</name>
    <name type="synonym">TIM23</name>
</gene>
<keyword id="KW-0472">Membrane</keyword>
<keyword id="KW-0496">Mitochondrion</keyword>
<keyword id="KW-0999">Mitochondrion inner membrane</keyword>
<keyword id="KW-0653">Protein transport</keyword>
<keyword id="KW-1267">Proteomics identification</keyword>
<keyword id="KW-1185">Reference proteome</keyword>
<keyword id="KW-0811">Translocation</keyword>
<keyword id="KW-0812">Transmembrane</keyword>
<keyword id="KW-1133">Transmembrane helix</keyword>
<keyword id="KW-0813">Transport</keyword>
<dbReference type="EMBL" id="AF030162">
    <property type="protein sequence ID" value="AAB84060.1"/>
    <property type="molecule type" value="mRNA"/>
</dbReference>
<dbReference type="EMBL" id="AY442341">
    <property type="protein sequence ID" value="AAR14723.1"/>
    <property type="molecule type" value="mRNA"/>
</dbReference>
<dbReference type="EMBL" id="AK223331">
    <property type="protein sequence ID" value="BAD97051.1"/>
    <property type="molecule type" value="mRNA"/>
</dbReference>
<dbReference type="EMBL" id="AL450342">
    <property type="status" value="NOT_ANNOTATED_CDS"/>
    <property type="molecule type" value="Genomic_DNA"/>
</dbReference>
<dbReference type="EMBL" id="BC062707">
    <property type="protein sequence ID" value="AAH62707.1"/>
    <property type="molecule type" value="mRNA"/>
</dbReference>
<dbReference type="EMBL" id="BC066951">
    <property type="protein sequence ID" value="AAH66951.1"/>
    <property type="molecule type" value="mRNA"/>
</dbReference>
<dbReference type="CCDS" id="CCDS73091.1"/>
<dbReference type="RefSeq" id="NP_006318.1">
    <property type="nucleotide sequence ID" value="NM_006327.4"/>
</dbReference>
<dbReference type="SMR" id="O14925"/>
<dbReference type="BioGRID" id="939591">
    <property type="interactions" value="95"/>
</dbReference>
<dbReference type="ComplexPortal" id="CPX-6129">
    <property type="entry name" value="TIM23 mitochondrial inner membrane pre-sequence translocase complex, TIM17A variant"/>
</dbReference>
<dbReference type="ComplexPortal" id="CPX-6130">
    <property type="entry name" value="TIM23 mitochondrial inner membrane pre-sequence translocase complex, TIM17B variant"/>
</dbReference>
<dbReference type="CORUM" id="O14925"/>
<dbReference type="FunCoup" id="O14925">
    <property type="interactions" value="1857"/>
</dbReference>
<dbReference type="IntAct" id="O14925">
    <property type="interactions" value="63"/>
</dbReference>
<dbReference type="MINT" id="O14925"/>
<dbReference type="STRING" id="9606.ENSP00000464522"/>
<dbReference type="GlyGen" id="O14925">
    <property type="glycosylation" value="3 sites, 1 N-linked glycan (1 site), 1 O-linked glycan (2 sites)"/>
</dbReference>
<dbReference type="iPTMnet" id="O14925"/>
<dbReference type="PhosphoSitePlus" id="O14925"/>
<dbReference type="SwissPalm" id="O14925"/>
<dbReference type="BioMuta" id="TIMM23"/>
<dbReference type="jPOST" id="O14925"/>
<dbReference type="MassIVE" id="O14925"/>
<dbReference type="PaxDb" id="9606-ENSP00000464522"/>
<dbReference type="PeptideAtlas" id="O14925"/>
<dbReference type="ProteomicsDB" id="48306"/>
<dbReference type="Pumba" id="O14925"/>
<dbReference type="TopDownProteomics" id="O14925"/>
<dbReference type="Antibodypedia" id="73127">
    <property type="antibodies" value="106 antibodies from 25 providers"/>
</dbReference>
<dbReference type="DNASU" id="100287932"/>
<dbReference type="Ensembl" id="ENST00000580018.4">
    <property type="protein sequence ID" value="ENSP00000464522.3"/>
    <property type="gene ID" value="ENSG00000265354.4"/>
</dbReference>
<dbReference type="GeneID" id="100287932"/>
<dbReference type="KEGG" id="hsa:100287932"/>
<dbReference type="MANE-Select" id="ENST00000580018.4">
    <property type="protein sequence ID" value="ENSP00000464522.3"/>
    <property type="RefSeq nucleotide sequence ID" value="NM_006327.4"/>
    <property type="RefSeq protein sequence ID" value="NP_006318.1"/>
</dbReference>
<dbReference type="UCSC" id="uc001jiu.5">
    <property type="organism name" value="human"/>
</dbReference>
<dbReference type="AGR" id="HGNC:17312"/>
<dbReference type="CTD" id="100287932"/>
<dbReference type="DisGeNET" id="100287932"/>
<dbReference type="GeneCards" id="TIMM23"/>
<dbReference type="HGNC" id="HGNC:17312">
    <property type="gene designation" value="TIMM23"/>
</dbReference>
<dbReference type="HPA" id="ENSG00000265354">
    <property type="expression patterns" value="Low tissue specificity"/>
</dbReference>
<dbReference type="MIM" id="605034">
    <property type="type" value="gene"/>
</dbReference>
<dbReference type="neXtProt" id="NX_O14925"/>
<dbReference type="OpenTargets" id="ENSG00000265354"/>
<dbReference type="PharmGKB" id="PA38227"/>
<dbReference type="VEuPathDB" id="HostDB:ENSG00000265354"/>
<dbReference type="eggNOG" id="KOG3324">
    <property type="taxonomic scope" value="Eukaryota"/>
</dbReference>
<dbReference type="GeneTree" id="ENSGT00390000001094"/>
<dbReference type="HOGENOM" id="CLU_063935_2_0_1"/>
<dbReference type="InParanoid" id="O14925"/>
<dbReference type="OMA" id="FTIGSCC"/>
<dbReference type="OrthoDB" id="159299at2759"/>
<dbReference type="PAN-GO" id="O14925">
    <property type="GO annotations" value="4 GO annotations based on evolutionary models"/>
</dbReference>
<dbReference type="PhylomeDB" id="O14925"/>
<dbReference type="TreeFam" id="TF106196"/>
<dbReference type="PathwayCommons" id="O14925"/>
<dbReference type="Reactome" id="R-HSA-1268020">
    <property type="pathway name" value="Mitochondrial protein import"/>
</dbReference>
<dbReference type="SignaLink" id="O14925"/>
<dbReference type="SIGNOR" id="O14925"/>
<dbReference type="BioGRID-ORCS" id="100287932">
    <property type="hits" value="539 hits in 1148 CRISPR screens"/>
</dbReference>
<dbReference type="CD-CODE" id="91857CE7">
    <property type="entry name" value="Nucleolus"/>
</dbReference>
<dbReference type="ChiTaRS" id="TIMM23">
    <property type="organism name" value="human"/>
</dbReference>
<dbReference type="GenomeRNAi" id="100287932"/>
<dbReference type="Pharos" id="O14925">
    <property type="development level" value="Tbio"/>
</dbReference>
<dbReference type="PRO" id="PR:O14925"/>
<dbReference type="Proteomes" id="UP000005640">
    <property type="component" value="Chromosome 10"/>
</dbReference>
<dbReference type="RNAct" id="O14925">
    <property type="molecule type" value="protein"/>
</dbReference>
<dbReference type="Bgee" id="ENSG00000265354">
    <property type="expression patterns" value="Expressed in gingival epithelium and 208 other cell types or tissues"/>
</dbReference>
<dbReference type="GO" id="GO:0005743">
    <property type="term" value="C:mitochondrial inner membrane"/>
    <property type="evidence" value="ECO:0000314"/>
    <property type="project" value="UniProtKB"/>
</dbReference>
<dbReference type="GO" id="GO:0005758">
    <property type="term" value="C:mitochondrial intermembrane space"/>
    <property type="evidence" value="ECO:0000314"/>
    <property type="project" value="MGI"/>
</dbReference>
<dbReference type="GO" id="GO:0005739">
    <property type="term" value="C:mitochondrion"/>
    <property type="evidence" value="ECO:0000314"/>
    <property type="project" value="HPA"/>
</dbReference>
<dbReference type="GO" id="GO:0005744">
    <property type="term" value="C:TIM23 mitochondrial import inner membrane translocase complex"/>
    <property type="evidence" value="ECO:0000314"/>
    <property type="project" value="BHF-UCL"/>
</dbReference>
<dbReference type="GO" id="GO:0008320">
    <property type="term" value="F:protein transmembrane transporter activity"/>
    <property type="evidence" value="ECO:0000318"/>
    <property type="project" value="GO_Central"/>
</dbReference>
<dbReference type="GO" id="GO:0006886">
    <property type="term" value="P:intracellular protein transport"/>
    <property type="evidence" value="ECO:0000303"/>
    <property type="project" value="ComplexPortal"/>
</dbReference>
<dbReference type="GO" id="GO:0030150">
    <property type="term" value="P:protein import into mitochondrial matrix"/>
    <property type="evidence" value="ECO:0000318"/>
    <property type="project" value="GO_Central"/>
</dbReference>
<dbReference type="GO" id="GO:0006626">
    <property type="term" value="P:protein targeting to mitochondrion"/>
    <property type="evidence" value="ECO:0000304"/>
    <property type="project" value="ProtInc"/>
</dbReference>
<dbReference type="GO" id="GO:0061734">
    <property type="term" value="P:type 2 mitophagy"/>
    <property type="evidence" value="ECO:0000315"/>
    <property type="project" value="UniProtKB"/>
</dbReference>
<dbReference type="InterPro" id="IPR005681">
    <property type="entry name" value="Tim23"/>
</dbReference>
<dbReference type="InterPro" id="IPR045238">
    <property type="entry name" value="Tim23-like"/>
</dbReference>
<dbReference type="NCBIfam" id="TIGR00983">
    <property type="entry name" value="3a0801s02tim23"/>
    <property type="match status" value="1"/>
</dbReference>
<dbReference type="PANTHER" id="PTHR15371:SF39">
    <property type="entry name" value="MITOCHONDRIAL IMPORT INNER MEMBRANE TRANSLOCASE SUBUNIT TIM23"/>
    <property type="match status" value="1"/>
</dbReference>
<dbReference type="PANTHER" id="PTHR15371">
    <property type="entry name" value="TIM23"/>
    <property type="match status" value="1"/>
</dbReference>
<dbReference type="Pfam" id="PF02466">
    <property type="entry name" value="Tim17"/>
    <property type="match status" value="1"/>
</dbReference>
<accession>O14925</accession>
<accession>Q53FF8</accession>
<accession>Q5T1E6</accession>
<accession>Q6P5S5</accession>
<proteinExistence type="evidence at protein level"/>
<sequence length="209" mass="21943">MEGGGGSGNKTTGGLAGFFGAGGAGYSHADLAGVPLTGMNPLSPYLNVDPRYLVQDTDEFILPTGANKTRGRFELAFFTIGGCCMTGAAFGAMNGLRLGLKETQNMAWSKPRNVQILNMVTRQGALWANTLGSLALLYSAFGVIIEKTRGAEDDLNTVAAGTMTGMLYKCTGGLRGIARGGLTGLTLTSLYALYNNWEHMKGSLLQQSL</sequence>
<reference key="1">
    <citation type="journal article" date="1999" name="J. Mol. Biol.">
        <title>Genetic and structural characterization of the human mitochondrial inner membrane translocase.</title>
        <authorList>
            <person name="Bauer M.F."/>
            <person name="Gempel K."/>
            <person name="Reichert A.S."/>
            <person name="Rappold G.A."/>
            <person name="Lichtner P."/>
            <person name="Gerbitz K.-D."/>
            <person name="Neupert W."/>
            <person name="Brunner M."/>
            <person name="Hofmann S."/>
        </authorList>
    </citation>
    <scope>NUCLEOTIDE SEQUENCE [MRNA]</scope>
</reference>
<reference key="2">
    <citation type="submission" date="2003-10" db="EMBL/GenBank/DDBJ databases">
        <title>Cloning of Homo sapiens translocase of inner mitochondrial membrane 23 (Tim23) mRNA.</title>
        <authorList>
            <person name="Cao X."/>
            <person name="Li Q."/>
            <person name="Jin K."/>
            <person name="Liu L."/>
            <person name="Dai S."/>
            <person name="Wu G."/>
            <person name="Dong C."/>
        </authorList>
    </citation>
    <scope>NUCLEOTIDE SEQUENCE [MRNA]</scope>
</reference>
<reference key="3">
    <citation type="submission" date="2005-04" db="EMBL/GenBank/DDBJ databases">
        <authorList>
            <person name="Suzuki Y."/>
            <person name="Sugano S."/>
            <person name="Totoki Y."/>
            <person name="Toyoda A."/>
            <person name="Takeda T."/>
            <person name="Sakaki Y."/>
            <person name="Tanaka A."/>
            <person name="Yokoyama S."/>
        </authorList>
    </citation>
    <scope>NUCLEOTIDE SEQUENCE [LARGE SCALE MRNA]</scope>
    <source>
        <tissue>Testis</tissue>
    </source>
</reference>
<reference key="4">
    <citation type="journal article" date="2004" name="Nature">
        <title>The DNA sequence and comparative analysis of human chromosome 10.</title>
        <authorList>
            <person name="Deloukas P."/>
            <person name="Earthrowl M.E."/>
            <person name="Grafham D.V."/>
            <person name="Rubenfield M."/>
            <person name="French L."/>
            <person name="Steward C.A."/>
            <person name="Sims S.K."/>
            <person name="Jones M.C."/>
            <person name="Searle S."/>
            <person name="Scott C."/>
            <person name="Howe K."/>
            <person name="Hunt S.E."/>
            <person name="Andrews T.D."/>
            <person name="Gilbert J.G.R."/>
            <person name="Swarbreck D."/>
            <person name="Ashurst J.L."/>
            <person name="Taylor A."/>
            <person name="Battles J."/>
            <person name="Bird C.P."/>
            <person name="Ainscough R."/>
            <person name="Almeida J.P."/>
            <person name="Ashwell R.I.S."/>
            <person name="Ambrose K.D."/>
            <person name="Babbage A.K."/>
            <person name="Bagguley C.L."/>
            <person name="Bailey J."/>
            <person name="Banerjee R."/>
            <person name="Bates K."/>
            <person name="Beasley H."/>
            <person name="Bray-Allen S."/>
            <person name="Brown A.J."/>
            <person name="Brown J.Y."/>
            <person name="Burford D.C."/>
            <person name="Burrill W."/>
            <person name="Burton J."/>
            <person name="Cahill P."/>
            <person name="Camire D."/>
            <person name="Carter N.P."/>
            <person name="Chapman J.C."/>
            <person name="Clark S.Y."/>
            <person name="Clarke G."/>
            <person name="Clee C.M."/>
            <person name="Clegg S."/>
            <person name="Corby N."/>
            <person name="Coulson A."/>
            <person name="Dhami P."/>
            <person name="Dutta I."/>
            <person name="Dunn M."/>
            <person name="Faulkner L."/>
            <person name="Frankish A."/>
            <person name="Frankland J.A."/>
            <person name="Garner P."/>
            <person name="Garnett J."/>
            <person name="Gribble S."/>
            <person name="Griffiths C."/>
            <person name="Grocock R."/>
            <person name="Gustafson E."/>
            <person name="Hammond S."/>
            <person name="Harley J.L."/>
            <person name="Hart E."/>
            <person name="Heath P.D."/>
            <person name="Ho T.P."/>
            <person name="Hopkins B."/>
            <person name="Horne J."/>
            <person name="Howden P.J."/>
            <person name="Huckle E."/>
            <person name="Hynds C."/>
            <person name="Johnson C."/>
            <person name="Johnson D."/>
            <person name="Kana A."/>
            <person name="Kay M."/>
            <person name="Kimberley A.M."/>
            <person name="Kershaw J.K."/>
            <person name="Kokkinaki M."/>
            <person name="Laird G.K."/>
            <person name="Lawlor S."/>
            <person name="Lee H.M."/>
            <person name="Leongamornlert D.A."/>
            <person name="Laird G."/>
            <person name="Lloyd C."/>
            <person name="Lloyd D.M."/>
            <person name="Loveland J."/>
            <person name="Lovell J."/>
            <person name="McLaren S."/>
            <person name="McLay K.E."/>
            <person name="McMurray A."/>
            <person name="Mashreghi-Mohammadi M."/>
            <person name="Matthews L."/>
            <person name="Milne S."/>
            <person name="Nickerson T."/>
            <person name="Nguyen M."/>
            <person name="Overton-Larty E."/>
            <person name="Palmer S.A."/>
            <person name="Pearce A.V."/>
            <person name="Peck A.I."/>
            <person name="Pelan S."/>
            <person name="Phillimore B."/>
            <person name="Porter K."/>
            <person name="Rice C.M."/>
            <person name="Rogosin A."/>
            <person name="Ross M.T."/>
            <person name="Sarafidou T."/>
            <person name="Sehra H.K."/>
            <person name="Shownkeen R."/>
            <person name="Skuce C.D."/>
            <person name="Smith M."/>
            <person name="Standring L."/>
            <person name="Sycamore N."/>
            <person name="Tester J."/>
            <person name="Thorpe A."/>
            <person name="Torcasso W."/>
            <person name="Tracey A."/>
            <person name="Tromans A."/>
            <person name="Tsolas J."/>
            <person name="Wall M."/>
            <person name="Walsh J."/>
            <person name="Wang H."/>
            <person name="Weinstock K."/>
            <person name="West A.P."/>
            <person name="Willey D.L."/>
            <person name="Whitehead S.L."/>
            <person name="Wilming L."/>
            <person name="Wray P.W."/>
            <person name="Young L."/>
            <person name="Chen Y."/>
            <person name="Lovering R.C."/>
            <person name="Moschonas N.K."/>
            <person name="Siebert R."/>
            <person name="Fechtel K."/>
            <person name="Bentley D."/>
            <person name="Durbin R.M."/>
            <person name="Hubbard T."/>
            <person name="Doucette-Stamm L."/>
            <person name="Beck S."/>
            <person name="Smith D.R."/>
            <person name="Rogers J."/>
        </authorList>
    </citation>
    <scope>NUCLEOTIDE SEQUENCE [LARGE SCALE GENOMIC DNA]</scope>
</reference>
<reference key="5">
    <citation type="journal article" date="2004" name="Genome Res.">
        <title>The status, quality, and expansion of the NIH full-length cDNA project: the Mammalian Gene Collection (MGC).</title>
        <authorList>
            <consortium name="The MGC Project Team"/>
        </authorList>
    </citation>
    <scope>NUCLEOTIDE SEQUENCE [LARGE SCALE MRNA]</scope>
    <source>
        <tissue>Brain</tissue>
        <tissue>Testis</tissue>
    </source>
</reference>
<reference key="6">
    <citation type="journal article" date="2004" name="J. Biol. Chem.">
        <title>Tim50, a component of the mitochondrial translocator, regulates mitochondrial integrity and cell death.</title>
        <authorList>
            <person name="Guo Y."/>
            <person name="Cheong N."/>
            <person name="Zhang Z."/>
            <person name="De Rose R."/>
            <person name="Deng Y."/>
            <person name="Farber S.A."/>
            <person name="Fernandes-Alnemri T."/>
            <person name="Alnemri E.S."/>
        </authorList>
    </citation>
    <scope>INTERACTION WITH TIMM50</scope>
</reference>
<reference key="7">
    <citation type="journal article" date="2013" name="Hum. Mol. Genet.">
        <title>Methylation-controlled J-protein MCJ acts in the import of proteins into human mitochondria.</title>
        <authorList>
            <person name="Schusdziarra C."/>
            <person name="Blamowska M."/>
            <person name="Azem A."/>
            <person name="Hell K."/>
        </authorList>
    </citation>
    <scope>INTERACTION WITH DNAJC15</scope>
</reference>
<reference key="8">
    <citation type="journal article" date="2015" name="Elife">
        <title>QIL1 is a novel mitochondrial protein required for MICOS complex stability and cristae morphology.</title>
        <authorList>
            <person name="Guarani V."/>
            <person name="McNeill E.M."/>
            <person name="Paulo J.A."/>
            <person name="Huttlin E.L."/>
            <person name="Froehlich F."/>
            <person name="Gygi S.P."/>
            <person name="Van Vactor D."/>
            <person name="Harper J.W."/>
        </authorList>
    </citation>
    <scope>SUBCELLULAR LOCATION</scope>
</reference>
<reference key="9">
    <citation type="journal article" date="2015" name="Proteomics">
        <title>N-terminome analysis of the human mitochondrial proteome.</title>
        <authorList>
            <person name="Vaca Jacome A.S."/>
            <person name="Rabilloud T."/>
            <person name="Schaeffer-Reiss C."/>
            <person name="Rompais M."/>
            <person name="Ayoub D."/>
            <person name="Lane L."/>
            <person name="Bairoch A."/>
            <person name="Van Dorsselaer A."/>
            <person name="Carapito C."/>
        </authorList>
    </citation>
    <scope>IDENTIFICATION BY MASS SPECTROMETRY [LARGE SCALE ANALYSIS]</scope>
</reference>
<reference key="10">
    <citation type="journal article" date="2023" name="Cell Rep.">
        <title>TIM23 facilitates PINK1 activation by safeguarding against OMA1-mediated degradation in damaged mitochondria.</title>
        <authorList>
            <person name="Akabane S."/>
            <person name="Watanabe K."/>
            <person name="Kosako H."/>
            <person name="Yamashita S.I."/>
            <person name="Nishino K."/>
            <person name="Kato M."/>
            <person name="Sekine S."/>
            <person name="Kanki T."/>
            <person name="Matsuda N."/>
            <person name="Endo T."/>
            <person name="Oka T."/>
        </authorList>
    </citation>
    <scope>INTERACTION WITH PINK1</scope>
    <scope>FUNCTION</scope>
</reference>
<protein>
    <recommendedName>
        <fullName>Mitochondrial import inner membrane translocase subunit Tim23</fullName>
    </recommendedName>
</protein>
<organism>
    <name type="scientific">Homo sapiens</name>
    <name type="common">Human</name>
    <dbReference type="NCBI Taxonomy" id="9606"/>
    <lineage>
        <taxon>Eukaryota</taxon>
        <taxon>Metazoa</taxon>
        <taxon>Chordata</taxon>
        <taxon>Craniata</taxon>
        <taxon>Vertebrata</taxon>
        <taxon>Euteleostomi</taxon>
        <taxon>Mammalia</taxon>
        <taxon>Eutheria</taxon>
        <taxon>Euarchontoglires</taxon>
        <taxon>Primates</taxon>
        <taxon>Haplorrhini</taxon>
        <taxon>Catarrhini</taxon>
        <taxon>Hominidae</taxon>
        <taxon>Homo</taxon>
    </lineage>
</organism>
<feature type="chain" id="PRO_0000210302" description="Mitochondrial import inner membrane translocase subunit Tim23">
    <location>
        <begin position="1"/>
        <end position="209"/>
    </location>
</feature>
<feature type="transmembrane region" description="Helical" evidence="1">
    <location>
        <begin position="73"/>
        <end position="93"/>
    </location>
</feature>
<feature type="transmembrane region" description="Helical" evidence="1">
    <location>
        <begin position="125"/>
        <end position="145"/>
    </location>
</feature>
<feature type="transmembrane region" description="Helical" evidence="1">
    <location>
        <begin position="181"/>
        <end position="197"/>
    </location>
</feature>
<feature type="sequence conflict" description="In Ref. 3; BAD97051." evidence="6" ref="3">
    <original>S</original>
    <variation>P</variation>
    <location>
        <position position="27"/>
    </location>
</feature>
<feature type="sequence conflict" description="In Ref. 5; AAH62707." evidence="6" ref="5">
    <location>
        <position position="62"/>
    </location>
</feature>
<comment type="function">
    <text evidence="5 7">Essential component of the TIM23 complex, a complex that mediates the translocation of transit peptide-containing proteins across the mitochondrial inner membrane (PubMed:10339406). Has a role in the activation of stress-induced mitophagy by protecting PINK1 from OMA1-mediated degradation and facilitating its accumulation at the outer mitochondrial membrane in response to depolarization (PubMed:37160114).</text>
</comment>
<comment type="subunit">
    <text evidence="2 3 5">Component of the TIM23 complex at least composed of TIMM23, TIMM17 (TIMM17A or TIMM17B) and TIMM50; within this complex, directly interacts with TIMM50 (PubMed:15044455). The complex interacts with the TIMM44 component of the PAM complex and with DNAJC15 (PubMed:23263864). Upon mitochondrial depolarization, interacts with PINK1; the interaction is required for PINK1 accumulation at the outer mitochondrial membrane, kinase activation by autophosphorylation and PRKN recruitement to mitochondria (PubMed:37160114).</text>
</comment>
<comment type="interaction">
    <interactant intactId="EBI-1047996">
        <id>O14925</id>
    </interactant>
    <interactant intactId="EBI-13059134">
        <id>Q13520</id>
        <label>AQP6</label>
    </interactant>
    <organismsDiffer>false</organismsDiffer>
    <experiments>3</experiments>
</comment>
<comment type="interaction">
    <interactant intactId="EBI-1047996">
        <id>O14925</id>
    </interactant>
    <interactant intactId="EBI-6942903">
        <id>Q96BA8</id>
        <label>CREB3L1</label>
    </interactant>
    <organismsDiffer>false</organismsDiffer>
    <experiments>3</experiments>
</comment>
<comment type="interaction">
    <interactant intactId="EBI-1047996">
        <id>O14925</id>
    </interactant>
    <interactant intactId="EBI-3915253">
        <id>Q15125</id>
        <label>EBP</label>
    </interactant>
    <organismsDiffer>false</organismsDiffer>
    <experiments>3</experiments>
</comment>
<comment type="interaction">
    <interactant intactId="EBI-1047996">
        <id>O14925</id>
    </interactant>
    <interactant intactId="EBI-18938272">
        <id>Q96KR6</id>
        <label>FAM210B</label>
    </interactant>
    <organismsDiffer>false</organismsDiffer>
    <experiments>3</experiments>
</comment>
<comment type="interaction">
    <interactant intactId="EBI-1047996">
        <id>O14925</id>
    </interactant>
    <interactant intactId="EBI-12175685">
        <id>Q14802-3</id>
        <label>FXYD3</label>
    </interactant>
    <organismsDiffer>false</organismsDiffer>
    <experiments>3</experiments>
</comment>
<comment type="interaction">
    <interactant intactId="EBI-1047996">
        <id>O14925</id>
    </interactant>
    <interactant intactId="EBI-17231387">
        <id>Q6ZVE7</id>
        <label>GOLT1A</label>
    </interactant>
    <organismsDiffer>false</organismsDiffer>
    <experiments>3</experiments>
</comment>
<comment type="interaction">
    <interactant intactId="EBI-1047996">
        <id>O14925</id>
    </interactant>
    <interactant intactId="EBI-18053395">
        <id>Q7Z5P4</id>
        <label>HSD17B13</label>
    </interactant>
    <organismsDiffer>false</organismsDiffer>
    <experiments>3</experiments>
</comment>
<comment type="interaction">
    <interactant intactId="EBI-1047996">
        <id>O14925</id>
    </interactant>
    <interactant intactId="EBI-10266796">
        <id>Q8N5M9</id>
        <label>JAGN1</label>
    </interactant>
    <organismsDiffer>false</organismsDiffer>
    <experiments>3</experiments>
</comment>
<comment type="interaction">
    <interactant intactId="EBI-1047996">
        <id>O14925</id>
    </interactant>
    <interactant intactId="EBI-21591415">
        <id>P13473-2</id>
        <label>LAMP2</label>
    </interactant>
    <organismsDiffer>false</organismsDiffer>
    <experiments>3</experiments>
</comment>
<comment type="interaction">
    <interactant intactId="EBI-1047996">
        <id>O14925</id>
    </interactant>
    <interactant intactId="EBI-18397230">
        <id>Q6P5S7</id>
        <label>RNASEK</label>
    </interactant>
    <organismsDiffer>false</organismsDiffer>
    <experiments>3</experiments>
</comment>
<comment type="interaction">
    <interactant intactId="EBI-1047996">
        <id>O14925</id>
    </interactant>
    <interactant intactId="EBI-17247926">
        <id>Q9NY72</id>
        <label>SCN3B</label>
    </interactant>
    <organismsDiffer>false</organismsDiffer>
    <experiments>3</experiments>
</comment>
<comment type="interaction">
    <interactant intactId="EBI-1047996">
        <id>O14925</id>
    </interactant>
    <interactant intactId="EBI-2623095">
        <id>Q9Y371</id>
        <label>SH3GLB1</label>
    </interactant>
    <organismsDiffer>false</organismsDiffer>
    <experiments>3</experiments>
</comment>
<comment type="interaction">
    <interactant intactId="EBI-1047996">
        <id>O14925</id>
    </interactant>
    <interactant intactId="EBI-3921243">
        <id>O60669</id>
        <label>SLC16A7</label>
    </interactant>
    <organismsDiffer>false</organismsDiffer>
    <experiments>3</experiments>
</comment>
<comment type="interaction">
    <interactant intactId="EBI-1047996">
        <id>O14925</id>
    </interactant>
    <interactant intactId="EBI-2372529">
        <id>O60830</id>
        <label>TIMM17B</label>
    </interactant>
    <organismsDiffer>false</organismsDiffer>
    <experiments>4</experiments>
</comment>
<comment type="interaction">
    <interactant intactId="EBI-1047996">
        <id>O14925</id>
    </interactant>
    <interactant intactId="EBI-6570759">
        <id>Q9BVV7</id>
        <label>TIMM21</label>
    </interactant>
    <organismsDiffer>false</organismsDiffer>
    <experiments>3</experiments>
</comment>
<comment type="interaction">
    <interactant intactId="EBI-1047996">
        <id>O14925</id>
    </interactant>
    <interactant intactId="EBI-12947623">
        <id>Q96MV1</id>
        <label>TLCD4</label>
    </interactant>
    <organismsDiffer>false</organismsDiffer>
    <experiments>3</experiments>
</comment>
<comment type="interaction">
    <interactant intactId="EBI-1047996">
        <id>O14925</id>
    </interactant>
    <interactant intactId="EBI-8638294">
        <id>Q9NUH8</id>
        <label>TMEM14B</label>
    </interactant>
    <organismsDiffer>false</organismsDiffer>
    <experiments>3</experiments>
</comment>
<comment type="interaction">
    <interactant intactId="EBI-1047996">
        <id>O14925</id>
    </interactant>
    <interactant intactId="EBI-2548832">
        <id>Q8N661</id>
        <label>TMEM86B</label>
    </interactant>
    <organismsDiffer>false</organismsDiffer>
    <experiments>3</experiments>
</comment>
<comment type="interaction">
    <interactant intactId="EBI-1047996">
        <id>O14925</id>
    </interactant>
    <interactant intactId="EBI-17198826">
        <id>Q6PEY1</id>
        <label>TMEM88</label>
    </interactant>
    <organismsDiffer>false</organismsDiffer>
    <experiments>3</experiments>
</comment>
<comment type="interaction">
    <interactant intactId="EBI-1047996">
        <id>O14925</id>
    </interactant>
    <interactant intactId="EBI-4289938">
        <id>P19075</id>
        <label>TSPAN8</label>
    </interactant>
    <organismsDiffer>false</organismsDiffer>
    <experiments>3</experiments>
</comment>
<comment type="subcellular location">
    <subcellularLocation>
        <location evidence="4">Mitochondrion inner membrane</location>
        <topology evidence="1">Multi-pass membrane protein</topology>
    </subcellularLocation>
</comment>
<comment type="similarity">
    <text evidence="6">Belongs to the Tim17/Tim22/Tim23 family.</text>
</comment>